<gene>
    <name evidence="1" type="primary">rpsH</name>
    <name type="ordered locus">MYPU_5730</name>
</gene>
<proteinExistence type="inferred from homology"/>
<sequence>MSIITDPIADMLTRIKNATKRKHKSVNIPFSNKKLKIVEIIKKEGYISGYEIVGQGIEKKILITLKYKGNTSAIFDLKRISKPGLRVYTTASNIPSVLSGYGIAIISTSKGILTDKEARKENVGGEVIAYIW</sequence>
<protein>
    <recommendedName>
        <fullName evidence="1">Small ribosomal subunit protein uS8</fullName>
    </recommendedName>
    <alternativeName>
        <fullName evidence="2">30S ribosomal protein S8</fullName>
    </alternativeName>
</protein>
<keyword id="KW-1185">Reference proteome</keyword>
<keyword id="KW-0687">Ribonucleoprotein</keyword>
<keyword id="KW-0689">Ribosomal protein</keyword>
<keyword id="KW-0694">RNA-binding</keyword>
<keyword id="KW-0699">rRNA-binding</keyword>
<dbReference type="EMBL" id="AL445565">
    <property type="protein sequence ID" value="CAC13746.1"/>
    <property type="molecule type" value="Genomic_DNA"/>
</dbReference>
<dbReference type="PIR" id="E90583">
    <property type="entry name" value="E90583"/>
</dbReference>
<dbReference type="RefSeq" id="WP_010925374.1">
    <property type="nucleotide sequence ID" value="NC_002771.1"/>
</dbReference>
<dbReference type="SMR" id="Q98PZ6"/>
<dbReference type="STRING" id="272635.gene:17577180"/>
<dbReference type="KEGG" id="mpu:MYPU_5730"/>
<dbReference type="eggNOG" id="COG0096">
    <property type="taxonomic scope" value="Bacteria"/>
</dbReference>
<dbReference type="HOGENOM" id="CLU_098428_0_2_14"/>
<dbReference type="BioCyc" id="MPUL272635:G1GT6-586-MONOMER"/>
<dbReference type="Proteomes" id="UP000000528">
    <property type="component" value="Chromosome"/>
</dbReference>
<dbReference type="GO" id="GO:1990904">
    <property type="term" value="C:ribonucleoprotein complex"/>
    <property type="evidence" value="ECO:0007669"/>
    <property type="project" value="UniProtKB-KW"/>
</dbReference>
<dbReference type="GO" id="GO:0005840">
    <property type="term" value="C:ribosome"/>
    <property type="evidence" value="ECO:0007669"/>
    <property type="project" value="UniProtKB-KW"/>
</dbReference>
<dbReference type="GO" id="GO:0019843">
    <property type="term" value="F:rRNA binding"/>
    <property type="evidence" value="ECO:0007669"/>
    <property type="project" value="UniProtKB-UniRule"/>
</dbReference>
<dbReference type="GO" id="GO:0003735">
    <property type="term" value="F:structural constituent of ribosome"/>
    <property type="evidence" value="ECO:0007669"/>
    <property type="project" value="InterPro"/>
</dbReference>
<dbReference type="GO" id="GO:0006412">
    <property type="term" value="P:translation"/>
    <property type="evidence" value="ECO:0007669"/>
    <property type="project" value="UniProtKB-UniRule"/>
</dbReference>
<dbReference type="FunFam" id="3.30.1370.30:FF:000002">
    <property type="entry name" value="30S ribosomal protein S8"/>
    <property type="match status" value="1"/>
</dbReference>
<dbReference type="FunFam" id="3.30.1490.10:FF:000001">
    <property type="entry name" value="30S ribosomal protein S8"/>
    <property type="match status" value="1"/>
</dbReference>
<dbReference type="Gene3D" id="3.30.1370.30">
    <property type="match status" value="1"/>
</dbReference>
<dbReference type="Gene3D" id="3.30.1490.10">
    <property type="match status" value="1"/>
</dbReference>
<dbReference type="HAMAP" id="MF_01302_B">
    <property type="entry name" value="Ribosomal_uS8_B"/>
    <property type="match status" value="1"/>
</dbReference>
<dbReference type="InterPro" id="IPR000630">
    <property type="entry name" value="Ribosomal_uS8"/>
</dbReference>
<dbReference type="InterPro" id="IPR047863">
    <property type="entry name" value="Ribosomal_uS8_CS"/>
</dbReference>
<dbReference type="InterPro" id="IPR035987">
    <property type="entry name" value="Ribosomal_uS8_sf"/>
</dbReference>
<dbReference type="NCBIfam" id="NF001109">
    <property type="entry name" value="PRK00136.1"/>
    <property type="match status" value="1"/>
</dbReference>
<dbReference type="PANTHER" id="PTHR11758">
    <property type="entry name" value="40S RIBOSOMAL PROTEIN S15A"/>
    <property type="match status" value="1"/>
</dbReference>
<dbReference type="Pfam" id="PF00410">
    <property type="entry name" value="Ribosomal_S8"/>
    <property type="match status" value="1"/>
</dbReference>
<dbReference type="SUPFAM" id="SSF56047">
    <property type="entry name" value="Ribosomal protein S8"/>
    <property type="match status" value="1"/>
</dbReference>
<dbReference type="PROSITE" id="PS00053">
    <property type="entry name" value="RIBOSOMAL_S8"/>
    <property type="match status" value="1"/>
</dbReference>
<reference key="1">
    <citation type="journal article" date="2001" name="Nucleic Acids Res.">
        <title>The complete genome sequence of the murine respiratory pathogen Mycoplasma pulmonis.</title>
        <authorList>
            <person name="Chambaud I."/>
            <person name="Heilig R."/>
            <person name="Ferris S."/>
            <person name="Barbe V."/>
            <person name="Samson D."/>
            <person name="Galisson F."/>
            <person name="Moszer I."/>
            <person name="Dybvig K."/>
            <person name="Wroblewski H."/>
            <person name="Viari A."/>
            <person name="Rocha E.P.C."/>
            <person name="Blanchard A."/>
        </authorList>
    </citation>
    <scope>NUCLEOTIDE SEQUENCE [LARGE SCALE GENOMIC DNA]</scope>
    <source>
        <strain>UAB CTIP</strain>
    </source>
</reference>
<organism>
    <name type="scientific">Mycoplasmopsis pulmonis (strain UAB CTIP)</name>
    <name type="common">Mycoplasma pulmonis</name>
    <dbReference type="NCBI Taxonomy" id="272635"/>
    <lineage>
        <taxon>Bacteria</taxon>
        <taxon>Bacillati</taxon>
        <taxon>Mycoplasmatota</taxon>
        <taxon>Mycoplasmoidales</taxon>
        <taxon>Metamycoplasmataceae</taxon>
        <taxon>Mycoplasmopsis</taxon>
    </lineage>
</organism>
<evidence type="ECO:0000255" key="1">
    <source>
        <dbReference type="HAMAP-Rule" id="MF_01302"/>
    </source>
</evidence>
<evidence type="ECO:0000305" key="2"/>
<accession>Q98PZ6</accession>
<name>RS8_MYCPU</name>
<feature type="chain" id="PRO_0000126447" description="Small ribosomal subunit protein uS8">
    <location>
        <begin position="1"/>
        <end position="132"/>
    </location>
</feature>
<comment type="function">
    <text evidence="1">One of the primary rRNA binding proteins, it binds directly to 16S rRNA central domain where it helps coordinate assembly of the platform of the 30S subunit.</text>
</comment>
<comment type="subunit">
    <text evidence="1">Part of the 30S ribosomal subunit. Contacts proteins S5 and S12.</text>
</comment>
<comment type="similarity">
    <text evidence="1">Belongs to the universal ribosomal protein uS8 family.</text>
</comment>